<feature type="chain" id="PRO_0000105713" description="Nodulation protein D 2">
    <location>
        <begin position="1"/>
        <end position="318"/>
    </location>
</feature>
<feature type="domain" description="HTH lysR-type" evidence="1">
    <location>
        <begin position="6"/>
        <end position="63"/>
    </location>
</feature>
<feature type="DNA-binding region" description="H-T-H motif" evidence="1">
    <location>
        <begin position="23"/>
        <end position="42"/>
    </location>
</feature>
<evidence type="ECO:0000255" key="1">
    <source>
        <dbReference type="PROSITE-ProRule" id="PRU00253"/>
    </source>
</evidence>
<evidence type="ECO:0000305" key="2"/>
<proteinExistence type="inferred from homology"/>
<keyword id="KW-0010">Activator</keyword>
<keyword id="KW-0238">DNA-binding</keyword>
<keyword id="KW-0536">Nodulation</keyword>
<keyword id="KW-0614">Plasmid</keyword>
<keyword id="KW-0678">Repressor</keyword>
<keyword id="KW-0804">Transcription</keyword>
<keyword id="KW-0805">Transcription regulation</keyword>
<geneLocation type="plasmid">
    <name>sym</name>
</geneLocation>
<accession>P23719</accession>
<comment type="function">
    <text>NodD regulates the expression of the nodABCFE genes which encode other nodulation proteins. NodD is also a negative regulator of its own expression. Binds flavonoids as inducers.</text>
</comment>
<comment type="similarity">
    <text evidence="2">Belongs to the LysR transcriptional regulatory family.</text>
</comment>
<name>NODD2_RHILP</name>
<organism>
    <name type="scientific">Rhizobium leguminosarum bv. phaseoli</name>
    <dbReference type="NCBI Taxonomy" id="385"/>
    <lineage>
        <taxon>Bacteria</taxon>
        <taxon>Pseudomonadati</taxon>
        <taxon>Pseudomonadota</taxon>
        <taxon>Alphaproteobacteria</taxon>
        <taxon>Hyphomicrobiales</taxon>
        <taxon>Rhizobiaceae</taxon>
        <taxon>Rhizobium/Agrobacterium group</taxon>
        <taxon>Rhizobium</taxon>
    </lineage>
</organism>
<protein>
    <recommendedName>
        <fullName>Nodulation protein D 2</fullName>
    </recommendedName>
</protein>
<sequence length="318" mass="35636">MRFKGLDLNLLVALDALTTERNLTAAARSINLSQPAMSAAIGRLRDYFRDELFTMNGRELRLTPRAEGLASAVRETLLQVQCSIISWEPFNPSKSDRCFRIVLSDFMMLIYFNKIIERVAREAPAVSFELLPLDSDPYEMLSRGDVDFLIVPEFFLSGAHPSAKLFTEKFVCVACSTNVDLPSALTIEQYVSTGHVAAAFGRFLKPSVEGWFLLENGIQRRVEVVVQGFSLIPPVLRGTNRIANLPLRLVEHYESTFPLRIINLPLPLPVFTEAVQWPALHNADPGSIWFREILVEEASRMMSSNAPKIHGLLQQSGS</sequence>
<dbReference type="EMBL" id="X54215">
    <property type="protein sequence ID" value="CAA38128.1"/>
    <property type="molecule type" value="Genomic_DNA"/>
</dbReference>
<dbReference type="PIR" id="S11789">
    <property type="entry name" value="S11789"/>
</dbReference>
<dbReference type="RefSeq" id="WP_004677768.1">
    <property type="nucleotide sequence ID" value="NZ_WNKD01000039.1"/>
</dbReference>
<dbReference type="SMR" id="P23719"/>
<dbReference type="GeneID" id="45960660"/>
<dbReference type="GO" id="GO:0003677">
    <property type="term" value="F:DNA binding"/>
    <property type="evidence" value="ECO:0007669"/>
    <property type="project" value="UniProtKB-KW"/>
</dbReference>
<dbReference type="GO" id="GO:0003700">
    <property type="term" value="F:DNA-binding transcription factor activity"/>
    <property type="evidence" value="ECO:0007669"/>
    <property type="project" value="InterPro"/>
</dbReference>
<dbReference type="CDD" id="cd08462">
    <property type="entry name" value="PBP2_NodD"/>
    <property type="match status" value="1"/>
</dbReference>
<dbReference type="Gene3D" id="3.40.190.10">
    <property type="entry name" value="Periplasmic binding protein-like II"/>
    <property type="match status" value="2"/>
</dbReference>
<dbReference type="Gene3D" id="1.10.10.10">
    <property type="entry name" value="Winged helix-like DNA-binding domain superfamily/Winged helix DNA-binding domain"/>
    <property type="match status" value="1"/>
</dbReference>
<dbReference type="InterPro" id="IPR050389">
    <property type="entry name" value="LysR-type_TF"/>
</dbReference>
<dbReference type="InterPro" id="IPR005119">
    <property type="entry name" value="LysR_subst-bd"/>
</dbReference>
<dbReference type="InterPro" id="IPR037416">
    <property type="entry name" value="NodD_PBP2"/>
</dbReference>
<dbReference type="InterPro" id="IPR000847">
    <property type="entry name" value="Tscrpt_reg_HTH_LysR"/>
</dbReference>
<dbReference type="InterPro" id="IPR036388">
    <property type="entry name" value="WH-like_DNA-bd_sf"/>
</dbReference>
<dbReference type="InterPro" id="IPR036390">
    <property type="entry name" value="WH_DNA-bd_sf"/>
</dbReference>
<dbReference type="PANTHER" id="PTHR30118:SF6">
    <property type="entry name" value="HTH-TYPE TRANSCRIPTIONAL REGULATOR LEUO"/>
    <property type="match status" value="1"/>
</dbReference>
<dbReference type="PANTHER" id="PTHR30118">
    <property type="entry name" value="HTH-TYPE TRANSCRIPTIONAL REGULATOR LEUO-RELATED"/>
    <property type="match status" value="1"/>
</dbReference>
<dbReference type="Pfam" id="PF00126">
    <property type="entry name" value="HTH_1"/>
    <property type="match status" value="1"/>
</dbReference>
<dbReference type="Pfam" id="PF03466">
    <property type="entry name" value="LysR_substrate"/>
    <property type="match status" value="1"/>
</dbReference>
<dbReference type="PRINTS" id="PR00039">
    <property type="entry name" value="HTHLYSR"/>
</dbReference>
<dbReference type="SUPFAM" id="SSF53850">
    <property type="entry name" value="Periplasmic binding protein-like II"/>
    <property type="match status" value="1"/>
</dbReference>
<dbReference type="SUPFAM" id="SSF46785">
    <property type="entry name" value="Winged helix' DNA-binding domain"/>
    <property type="match status" value="1"/>
</dbReference>
<dbReference type="PROSITE" id="PS50931">
    <property type="entry name" value="HTH_LYSR"/>
    <property type="match status" value="1"/>
</dbReference>
<gene>
    <name type="primary">nodD2</name>
</gene>
<reference key="1">
    <citation type="journal article" date="1990" name="Mol. Microbiol.">
        <title>Analysis of three nodD genes in Rhizobium leguminosarum biovar phaseoli; nodD1 is preceded by noIE, a gene whose product is secreted from the cytoplasm.</title>
        <authorList>
            <person name="Davis E.O."/>
            <person name="Johnston A.W.B."/>
        </authorList>
    </citation>
    <scope>NUCLEOTIDE SEQUENCE [GENOMIC DNA]</scope>
    <source>
        <strain>8002</strain>
    </source>
</reference>